<proteinExistence type="evidence at protein level"/>
<protein>
    <recommendedName>
        <fullName evidence="3">Periviscerokinin-1</fullName>
        <shortName evidence="3">PseBi-PVK-1</shortName>
    </recommendedName>
</protein>
<reference evidence="4" key="1">
    <citation type="journal article" date="2009" name="BMC Evol. Biol.">
        <title>A proteomic approach for studying insect phylogeny: CAPA peptides of ancient insect taxa (Dictyoptera, Blattoptera) as a test case.</title>
        <authorList>
            <person name="Roth S."/>
            <person name="Fromm B."/>
            <person name="Gaede G."/>
            <person name="Predel R."/>
        </authorList>
    </citation>
    <scope>PROTEIN SEQUENCE</scope>
    <scope>AMIDATION AT ASN-11</scope>
    <source>
        <tissue evidence="2">Abdominal perisympathetic organs</tissue>
    </source>
</reference>
<organism>
    <name type="scientific">Pseudoderopeltis cf. bimaculata JT-2004</name>
    <name type="common">Harlequin cockroach</name>
    <dbReference type="NCBI Taxonomy" id="304880"/>
    <lineage>
        <taxon>Eukaryota</taxon>
        <taxon>Metazoa</taxon>
        <taxon>Ecdysozoa</taxon>
        <taxon>Arthropoda</taxon>
        <taxon>Hexapoda</taxon>
        <taxon>Insecta</taxon>
        <taxon>Pterygota</taxon>
        <taxon>Neoptera</taxon>
        <taxon>Polyneoptera</taxon>
        <taxon>Dictyoptera</taxon>
        <taxon>Blattodea</taxon>
        <taxon>Blattoidea</taxon>
        <taxon>Blattidae</taxon>
        <taxon>Blattinae</taxon>
        <taxon>Pseudoderopeltis</taxon>
    </lineage>
</organism>
<keyword id="KW-0027">Amidation</keyword>
<keyword id="KW-0903">Direct protein sequencing</keyword>
<keyword id="KW-0527">Neuropeptide</keyword>
<keyword id="KW-0964">Secreted</keyword>
<accession>P85750</accession>
<feature type="peptide" id="PRO_0000378766" description="Periviscerokinin-1" evidence="2">
    <location>
        <begin position="1"/>
        <end position="11"/>
    </location>
</feature>
<feature type="modified residue" description="Asparagine amide" evidence="2">
    <location>
        <position position="11"/>
    </location>
</feature>
<dbReference type="GO" id="GO:0005576">
    <property type="term" value="C:extracellular region"/>
    <property type="evidence" value="ECO:0007669"/>
    <property type="project" value="UniProtKB-SubCell"/>
</dbReference>
<dbReference type="GO" id="GO:0007218">
    <property type="term" value="P:neuropeptide signaling pathway"/>
    <property type="evidence" value="ECO:0007669"/>
    <property type="project" value="UniProtKB-KW"/>
</dbReference>
<comment type="function">
    <text evidence="4">Mediates visceral muscle contractile activity (myotropic activity).</text>
</comment>
<comment type="subcellular location">
    <subcellularLocation>
        <location evidence="4">Secreted</location>
    </subcellularLocation>
</comment>
<comment type="similarity">
    <text evidence="1">Belongs to the periviscerokinin family.</text>
</comment>
<evidence type="ECO:0000255" key="1"/>
<evidence type="ECO:0000269" key="2">
    <source>
    </source>
</evidence>
<evidence type="ECO:0000303" key="3">
    <source>
    </source>
</evidence>
<evidence type="ECO:0000305" key="4"/>
<name>PVK1_PSEBJ</name>
<sequence length="11" mass="1114">GASGLIPVMRN</sequence>